<dbReference type="EC" id="2.1.2.9" evidence="1"/>
<dbReference type="EMBL" id="CP000236">
    <property type="protein sequence ID" value="ABD45352.1"/>
    <property type="molecule type" value="Genomic_DNA"/>
</dbReference>
<dbReference type="RefSeq" id="WP_011452883.1">
    <property type="nucleotide sequence ID" value="NC_007799.1"/>
</dbReference>
<dbReference type="SMR" id="Q2GFU1"/>
<dbReference type="STRING" id="205920.ECH_0897"/>
<dbReference type="KEGG" id="ech:ECH_0897"/>
<dbReference type="eggNOG" id="COG0223">
    <property type="taxonomic scope" value="Bacteria"/>
</dbReference>
<dbReference type="HOGENOM" id="CLU_033347_1_1_5"/>
<dbReference type="OrthoDB" id="9802815at2"/>
<dbReference type="Proteomes" id="UP000008320">
    <property type="component" value="Chromosome"/>
</dbReference>
<dbReference type="GO" id="GO:0005829">
    <property type="term" value="C:cytosol"/>
    <property type="evidence" value="ECO:0007669"/>
    <property type="project" value="TreeGrafter"/>
</dbReference>
<dbReference type="GO" id="GO:0004479">
    <property type="term" value="F:methionyl-tRNA formyltransferase activity"/>
    <property type="evidence" value="ECO:0007669"/>
    <property type="project" value="UniProtKB-UniRule"/>
</dbReference>
<dbReference type="CDD" id="cd08646">
    <property type="entry name" value="FMT_core_Met-tRNA-FMT_N"/>
    <property type="match status" value="1"/>
</dbReference>
<dbReference type="CDD" id="cd08704">
    <property type="entry name" value="Met_tRNA_FMT_C"/>
    <property type="match status" value="1"/>
</dbReference>
<dbReference type="Gene3D" id="3.10.25.10">
    <property type="entry name" value="Formyl transferase, C-terminal domain"/>
    <property type="match status" value="1"/>
</dbReference>
<dbReference type="Gene3D" id="3.40.50.170">
    <property type="entry name" value="Formyl transferase, N-terminal domain"/>
    <property type="match status" value="1"/>
</dbReference>
<dbReference type="HAMAP" id="MF_00182">
    <property type="entry name" value="Formyl_trans"/>
    <property type="match status" value="1"/>
</dbReference>
<dbReference type="InterPro" id="IPR005794">
    <property type="entry name" value="Fmt"/>
</dbReference>
<dbReference type="InterPro" id="IPR005793">
    <property type="entry name" value="Formyl_trans_C"/>
</dbReference>
<dbReference type="InterPro" id="IPR037022">
    <property type="entry name" value="Formyl_trans_C_sf"/>
</dbReference>
<dbReference type="InterPro" id="IPR002376">
    <property type="entry name" value="Formyl_transf_N"/>
</dbReference>
<dbReference type="InterPro" id="IPR036477">
    <property type="entry name" value="Formyl_transf_N_sf"/>
</dbReference>
<dbReference type="InterPro" id="IPR011034">
    <property type="entry name" value="Formyl_transferase-like_C_sf"/>
</dbReference>
<dbReference type="InterPro" id="IPR044135">
    <property type="entry name" value="Met-tRNA-FMT_C"/>
</dbReference>
<dbReference type="InterPro" id="IPR041711">
    <property type="entry name" value="Met-tRNA-FMT_N"/>
</dbReference>
<dbReference type="NCBIfam" id="TIGR00460">
    <property type="entry name" value="fmt"/>
    <property type="match status" value="1"/>
</dbReference>
<dbReference type="PANTHER" id="PTHR11138">
    <property type="entry name" value="METHIONYL-TRNA FORMYLTRANSFERASE"/>
    <property type="match status" value="1"/>
</dbReference>
<dbReference type="PANTHER" id="PTHR11138:SF5">
    <property type="entry name" value="METHIONYL-TRNA FORMYLTRANSFERASE, MITOCHONDRIAL"/>
    <property type="match status" value="1"/>
</dbReference>
<dbReference type="Pfam" id="PF02911">
    <property type="entry name" value="Formyl_trans_C"/>
    <property type="match status" value="1"/>
</dbReference>
<dbReference type="Pfam" id="PF00551">
    <property type="entry name" value="Formyl_trans_N"/>
    <property type="match status" value="1"/>
</dbReference>
<dbReference type="SUPFAM" id="SSF50486">
    <property type="entry name" value="FMT C-terminal domain-like"/>
    <property type="match status" value="1"/>
</dbReference>
<dbReference type="SUPFAM" id="SSF53328">
    <property type="entry name" value="Formyltransferase"/>
    <property type="match status" value="1"/>
</dbReference>
<reference key="1">
    <citation type="journal article" date="2006" name="PLoS Genet.">
        <title>Comparative genomics of emerging human ehrlichiosis agents.</title>
        <authorList>
            <person name="Dunning Hotopp J.C."/>
            <person name="Lin M."/>
            <person name="Madupu R."/>
            <person name="Crabtree J."/>
            <person name="Angiuoli S.V."/>
            <person name="Eisen J.A."/>
            <person name="Seshadri R."/>
            <person name="Ren Q."/>
            <person name="Wu M."/>
            <person name="Utterback T.R."/>
            <person name="Smith S."/>
            <person name="Lewis M."/>
            <person name="Khouri H."/>
            <person name="Zhang C."/>
            <person name="Niu H."/>
            <person name="Lin Q."/>
            <person name="Ohashi N."/>
            <person name="Zhi N."/>
            <person name="Nelson W.C."/>
            <person name="Brinkac L.M."/>
            <person name="Dodson R.J."/>
            <person name="Rosovitz M.J."/>
            <person name="Sundaram J.P."/>
            <person name="Daugherty S.C."/>
            <person name="Davidsen T."/>
            <person name="Durkin A.S."/>
            <person name="Gwinn M.L."/>
            <person name="Haft D.H."/>
            <person name="Selengut J.D."/>
            <person name="Sullivan S.A."/>
            <person name="Zafar N."/>
            <person name="Zhou L."/>
            <person name="Benahmed F."/>
            <person name="Forberger H."/>
            <person name="Halpin R."/>
            <person name="Mulligan S."/>
            <person name="Robinson J."/>
            <person name="White O."/>
            <person name="Rikihisa Y."/>
            <person name="Tettelin H."/>
        </authorList>
    </citation>
    <scope>NUCLEOTIDE SEQUENCE [LARGE SCALE GENOMIC DNA]</scope>
    <source>
        <strain>ATCC CRL-10679 / Arkansas</strain>
    </source>
</reference>
<name>FMT_EHRCR</name>
<accession>Q2GFU1</accession>
<gene>
    <name evidence="1" type="primary">fmt</name>
    <name type="ordered locus">ECH_0897</name>
</gene>
<organism>
    <name type="scientific">Ehrlichia chaffeensis (strain ATCC CRL-10679 / Arkansas)</name>
    <dbReference type="NCBI Taxonomy" id="205920"/>
    <lineage>
        <taxon>Bacteria</taxon>
        <taxon>Pseudomonadati</taxon>
        <taxon>Pseudomonadota</taxon>
        <taxon>Alphaproteobacteria</taxon>
        <taxon>Rickettsiales</taxon>
        <taxon>Anaplasmataceae</taxon>
        <taxon>Ehrlichia</taxon>
    </lineage>
</organism>
<evidence type="ECO:0000255" key="1">
    <source>
        <dbReference type="HAMAP-Rule" id="MF_00182"/>
    </source>
</evidence>
<feature type="chain" id="PRO_1000020059" description="Methionyl-tRNA formyltransferase">
    <location>
        <begin position="1"/>
        <end position="303"/>
    </location>
</feature>
<feature type="binding site" evidence="1">
    <location>
        <begin position="111"/>
        <end position="114"/>
    </location>
    <ligand>
        <name>(6S)-5,6,7,8-tetrahydrofolate</name>
        <dbReference type="ChEBI" id="CHEBI:57453"/>
    </ligand>
</feature>
<keyword id="KW-0648">Protein biosynthesis</keyword>
<keyword id="KW-1185">Reference proteome</keyword>
<keyword id="KW-0808">Transferase</keyword>
<protein>
    <recommendedName>
        <fullName evidence="1">Methionyl-tRNA formyltransferase</fullName>
        <ecNumber evidence="1">2.1.2.9</ecNumber>
    </recommendedName>
</protein>
<proteinExistence type="inferred from homology"/>
<sequence length="303" mass="34053">MKIIFMGSPEFSVPALCALLEEKDHEVIAVYTRLPKPAGRRGKVLTKTPIHIIAEQNNIEVNTPKSLKHDYEQEKIFALNPDVIVVVAYGLIIPEAVLSIPKYGCINIHPSLLPRWRGAAPIHYAILSGDEQTGVTIMQMNELWDEGDILLQRDIPIDEQDNIDTLSQKLSNLGSSMLIEVLNNIDHLVPIKQNANDATYTNKIIDFHIDCNEEAQVICRKIRALYPKAFLFFNDKRLRILKANYCPDSDLQNLKPGTVINSHMHIKCKNGVLIPLIVQLEGKNPCSINDFIHGYSISNSSIT</sequence>
<comment type="function">
    <text evidence="1">Attaches a formyl group to the free amino group of methionyl-tRNA(fMet). The formyl group appears to play a dual role in the initiator identity of N-formylmethionyl-tRNA by promoting its recognition by IF2 and preventing the misappropriation of this tRNA by the elongation apparatus.</text>
</comment>
<comment type="catalytic activity">
    <reaction evidence="1">
        <text>L-methionyl-tRNA(fMet) + (6R)-10-formyltetrahydrofolate = N-formyl-L-methionyl-tRNA(fMet) + (6S)-5,6,7,8-tetrahydrofolate + H(+)</text>
        <dbReference type="Rhea" id="RHEA:24380"/>
        <dbReference type="Rhea" id="RHEA-COMP:9952"/>
        <dbReference type="Rhea" id="RHEA-COMP:9953"/>
        <dbReference type="ChEBI" id="CHEBI:15378"/>
        <dbReference type="ChEBI" id="CHEBI:57453"/>
        <dbReference type="ChEBI" id="CHEBI:78530"/>
        <dbReference type="ChEBI" id="CHEBI:78844"/>
        <dbReference type="ChEBI" id="CHEBI:195366"/>
        <dbReference type="EC" id="2.1.2.9"/>
    </reaction>
</comment>
<comment type="similarity">
    <text evidence="1">Belongs to the Fmt family.</text>
</comment>